<protein>
    <recommendedName>
        <fullName evidence="1">Peptide chain release factor 2</fullName>
        <shortName evidence="1">RF-2</shortName>
    </recommendedName>
</protein>
<comment type="function">
    <text evidence="1">Peptide chain release factor 2 directs the termination of translation in response to the peptide chain termination codons UGA and UAA.</text>
</comment>
<comment type="subcellular location">
    <subcellularLocation>
        <location evidence="1">Cytoplasm</location>
    </subcellularLocation>
</comment>
<comment type="PTM">
    <text evidence="1">Methylated by PrmC. Methylation increases the termination efficiency of RF2.</text>
</comment>
<comment type="similarity">
    <text evidence="1">Belongs to the prokaryotic/mitochondrial release factor family.</text>
</comment>
<reference key="1">
    <citation type="journal article" date="2001" name="Genome Res.">
        <title>The complete genome sequence of the lactic acid bacterium Lactococcus lactis ssp. lactis IL1403.</title>
        <authorList>
            <person name="Bolotin A."/>
            <person name="Wincker P."/>
            <person name="Mauger S."/>
            <person name="Jaillon O."/>
            <person name="Malarme K."/>
            <person name="Weissenbach J."/>
            <person name="Ehrlich S.D."/>
            <person name="Sorokin A."/>
        </authorList>
    </citation>
    <scope>NUCLEOTIDE SEQUENCE [LARGE SCALE GENOMIC DNA]</scope>
    <source>
        <strain>IL1403</strain>
    </source>
</reference>
<keyword id="KW-0963">Cytoplasm</keyword>
<keyword id="KW-0488">Methylation</keyword>
<keyword id="KW-0648">Protein biosynthesis</keyword>
<keyword id="KW-1185">Reference proteome</keyword>
<organism>
    <name type="scientific">Lactococcus lactis subsp. lactis (strain IL1403)</name>
    <name type="common">Streptococcus lactis</name>
    <dbReference type="NCBI Taxonomy" id="272623"/>
    <lineage>
        <taxon>Bacteria</taxon>
        <taxon>Bacillati</taxon>
        <taxon>Bacillota</taxon>
        <taxon>Bacilli</taxon>
        <taxon>Lactobacillales</taxon>
        <taxon>Streptococcaceae</taxon>
        <taxon>Lactococcus</taxon>
    </lineage>
</organism>
<accession>Q9CGX1</accession>
<proteinExistence type="inferred from homology"/>
<evidence type="ECO:0000255" key="1">
    <source>
        <dbReference type="HAMAP-Rule" id="MF_00094"/>
    </source>
</evidence>
<name>RF2_LACLA</name>
<gene>
    <name evidence="1" type="primary">prfB</name>
    <name type="ordered locus">LL0971</name>
    <name type="ORF">L0374</name>
</gene>
<sequence>MELSEIRNLLEGYAEKINGFRESLDLERLEEEIALLENDMAQPEFWNDQAAAQKVIDESNALKAKYDNYQAMNNMLEEAQTMLEMLQEEADEEMQAELEEMTIALGQKIESYELEIMLNQPYDHMNAVLEIHPGSGGTESQDWGSMLMRMYTRWGEAHGFKVEILDYQDGDVAGLKSVALRFVGRNAYGFLRGEKGVHRLVRISPFDSANRRHTSFTSVDVMPELDDSIEVDVRDADVKMDTFRSGGAGGQNVNKVSTGVRLTHIPTGIVVQSTMDRTQYGNRDKAMAMLKSKLYQLEMDKKQAEVDELRGDQSEISWGSQIRSYVFMPYQLVKDTRTGYETGQISNVMDGELDGFINAYLRWNL</sequence>
<feature type="chain" id="PRO_0000166823" description="Peptide chain release factor 2">
    <location>
        <begin position="1"/>
        <end position="365"/>
    </location>
</feature>
<feature type="modified residue" description="N5-methylglutamine" evidence="1">
    <location>
        <position position="251"/>
    </location>
</feature>
<dbReference type="EMBL" id="AE005176">
    <property type="protein sequence ID" value="AAK05069.1"/>
    <property type="molecule type" value="Genomic_DNA"/>
</dbReference>
<dbReference type="PIR" id="C86746">
    <property type="entry name" value="C86746"/>
</dbReference>
<dbReference type="RefSeq" id="NP_267127.1">
    <property type="nucleotide sequence ID" value="NC_002662.1"/>
</dbReference>
<dbReference type="RefSeq" id="WP_003130963.1">
    <property type="nucleotide sequence ID" value="NC_002662.1"/>
</dbReference>
<dbReference type="SMR" id="Q9CGX1"/>
<dbReference type="PaxDb" id="272623-L0374"/>
<dbReference type="EnsemblBacteria" id="AAK05069">
    <property type="protein sequence ID" value="AAK05069"/>
    <property type="gene ID" value="L0374"/>
</dbReference>
<dbReference type="GeneID" id="89633157"/>
<dbReference type="KEGG" id="lla:L0374"/>
<dbReference type="PATRIC" id="fig|272623.7.peg.1039"/>
<dbReference type="eggNOG" id="COG1186">
    <property type="taxonomic scope" value="Bacteria"/>
</dbReference>
<dbReference type="HOGENOM" id="CLU_036856_6_0_9"/>
<dbReference type="OrthoDB" id="9806673at2"/>
<dbReference type="Proteomes" id="UP000002196">
    <property type="component" value="Chromosome"/>
</dbReference>
<dbReference type="GO" id="GO:0005737">
    <property type="term" value="C:cytoplasm"/>
    <property type="evidence" value="ECO:0007669"/>
    <property type="project" value="UniProtKB-SubCell"/>
</dbReference>
<dbReference type="GO" id="GO:0016149">
    <property type="term" value="F:translation release factor activity, codon specific"/>
    <property type="evidence" value="ECO:0007669"/>
    <property type="project" value="UniProtKB-UniRule"/>
</dbReference>
<dbReference type="Gene3D" id="3.30.160.20">
    <property type="match status" value="1"/>
</dbReference>
<dbReference type="Gene3D" id="3.30.70.1660">
    <property type="match status" value="1"/>
</dbReference>
<dbReference type="Gene3D" id="1.20.58.410">
    <property type="entry name" value="Release factor"/>
    <property type="match status" value="1"/>
</dbReference>
<dbReference type="HAMAP" id="MF_00094">
    <property type="entry name" value="Rel_fac_2"/>
    <property type="match status" value="1"/>
</dbReference>
<dbReference type="InterPro" id="IPR005139">
    <property type="entry name" value="PCRF"/>
</dbReference>
<dbReference type="InterPro" id="IPR000352">
    <property type="entry name" value="Pep_chain_release_fac_I"/>
</dbReference>
<dbReference type="InterPro" id="IPR045853">
    <property type="entry name" value="Pep_chain_release_fac_I_sf"/>
</dbReference>
<dbReference type="InterPro" id="IPR004374">
    <property type="entry name" value="PrfB"/>
</dbReference>
<dbReference type="NCBIfam" id="TIGR00020">
    <property type="entry name" value="prfB"/>
    <property type="match status" value="1"/>
</dbReference>
<dbReference type="PANTHER" id="PTHR43116:SF3">
    <property type="entry name" value="CLASS I PEPTIDE CHAIN RELEASE FACTOR"/>
    <property type="match status" value="1"/>
</dbReference>
<dbReference type="PANTHER" id="PTHR43116">
    <property type="entry name" value="PEPTIDE CHAIN RELEASE FACTOR 2"/>
    <property type="match status" value="1"/>
</dbReference>
<dbReference type="Pfam" id="PF03462">
    <property type="entry name" value="PCRF"/>
    <property type="match status" value="1"/>
</dbReference>
<dbReference type="Pfam" id="PF00472">
    <property type="entry name" value="RF-1"/>
    <property type="match status" value="1"/>
</dbReference>
<dbReference type="SMART" id="SM00937">
    <property type="entry name" value="PCRF"/>
    <property type="match status" value="1"/>
</dbReference>
<dbReference type="SUPFAM" id="SSF75620">
    <property type="entry name" value="Release factor"/>
    <property type="match status" value="1"/>
</dbReference>
<dbReference type="PROSITE" id="PS00745">
    <property type="entry name" value="RF_PROK_I"/>
    <property type="match status" value="1"/>
</dbReference>